<accession>P87219</accession>
<accession>A0A1D8PMK2</accession>
<accession>Q5A1C3</accession>
<comment type="function">
    <text evidence="3">Catalyzes the NADP dependent reduction of L-sorbose to D-glucitol. Can also convert fructose to mannitol, but less efficiently.</text>
</comment>
<comment type="catalytic activity">
    <reaction evidence="3">
        <text>D-sorbitol + NADP(+) = keto-L-sorbose + NADPH + H(+)</text>
        <dbReference type="Rhea" id="RHEA:14609"/>
        <dbReference type="ChEBI" id="CHEBI:13172"/>
        <dbReference type="ChEBI" id="CHEBI:15378"/>
        <dbReference type="ChEBI" id="CHEBI:17924"/>
        <dbReference type="ChEBI" id="CHEBI:57783"/>
        <dbReference type="ChEBI" id="CHEBI:58349"/>
        <dbReference type="EC" id="1.1.1.289"/>
    </reaction>
</comment>
<comment type="biophysicochemical properties">
    <kinetics>
        <KM evidence="3">3.95 uM for sorbose</KM>
        <Vmax evidence="3">378.0 umol/min/mg enzyme with sorbose as substrate</Vmax>
        <Vmax evidence="3">74.0 umol/min/mg enzyme with fructose as substrate</Vmax>
    </kinetics>
    <phDependence>
        <text evidence="3">Optimum pH is 6.2.</text>
    </phDependence>
</comment>
<comment type="pathway">
    <text>Carbohydrate degradation; L-sorbose degradation.</text>
</comment>
<comment type="subunit">
    <text evidence="3">Homotetramer.</text>
</comment>
<comment type="similarity">
    <text evidence="4">Belongs to the short-chain dehydrogenases/reductases (SDR) family.</text>
</comment>
<name>SOU1_CANAL</name>
<keyword id="KW-0119">Carbohydrate metabolism</keyword>
<keyword id="KW-0521">NADP</keyword>
<keyword id="KW-0560">Oxidoreductase</keyword>
<keyword id="KW-1185">Reference proteome</keyword>
<evidence type="ECO:0000250" key="1">
    <source>
        <dbReference type="UniProtKB" id="L0E2Z4"/>
    </source>
</evidence>
<evidence type="ECO:0000250" key="2">
    <source>
        <dbReference type="UniProtKB" id="O93868"/>
    </source>
</evidence>
<evidence type="ECO:0000269" key="3">
    <source>
    </source>
</evidence>
<evidence type="ECO:0000305" key="4"/>
<gene>
    <name type="primary">SOU1</name>
    <name type="ordered locus">CAALFM_C406390WA</name>
    <name type="ORF">CaO19.10414</name>
    <name type="ORF">CaO19.2896</name>
</gene>
<feature type="chain" id="PRO_0000054776" description="Sorbose reductase SOU1">
    <location>
        <begin position="1"/>
        <end position="281"/>
    </location>
</feature>
<feature type="active site" description="Proton donor" evidence="2">
    <location>
        <position position="173"/>
    </location>
</feature>
<feature type="active site" description="Proton donor" evidence="2">
    <location>
        <position position="188"/>
    </location>
</feature>
<feature type="active site" description="Lowers pKa of active site Tyr" evidence="2">
    <location>
        <position position="192"/>
    </location>
</feature>
<feature type="binding site" evidence="1">
    <location>
        <position position="47"/>
    </location>
    <ligand>
        <name>NADP(+)</name>
        <dbReference type="ChEBI" id="CHEBI:58349"/>
    </ligand>
</feature>
<feature type="binding site" evidence="1">
    <location>
        <position position="74"/>
    </location>
    <ligand>
        <name>NADP(+)</name>
        <dbReference type="ChEBI" id="CHEBI:58349"/>
    </ligand>
</feature>
<feature type="binding site" evidence="2">
    <location>
        <position position="119"/>
    </location>
    <ligand>
        <name>NADP(+)</name>
        <dbReference type="ChEBI" id="CHEBI:58349"/>
    </ligand>
</feature>
<feature type="binding site" evidence="2">
    <location>
        <position position="188"/>
    </location>
    <ligand>
        <name>NADP(+)</name>
        <dbReference type="ChEBI" id="CHEBI:58349"/>
    </ligand>
</feature>
<feature type="binding site" evidence="2">
    <location>
        <position position="192"/>
    </location>
    <ligand>
        <name>NADP(+)</name>
        <dbReference type="ChEBI" id="CHEBI:58349"/>
    </ligand>
</feature>
<feature type="binding site" evidence="2">
    <location>
        <position position="221"/>
    </location>
    <ligand>
        <name>NADP(+)</name>
        <dbReference type="ChEBI" id="CHEBI:58349"/>
    </ligand>
</feature>
<feature type="binding site" evidence="1">
    <location>
        <position position="223"/>
    </location>
    <ligand>
        <name>NADP(+)</name>
        <dbReference type="ChEBI" id="CHEBI:58349"/>
    </ligand>
</feature>
<proteinExistence type="evidence at protein level"/>
<protein>
    <recommendedName>
        <fullName>Sorbose reductase SOU1</fullName>
        <ecNumber evidence="3">1.1.1.289</ecNumber>
    </recommendedName>
    <alternativeName>
        <fullName>Sorbitol utilization protein SOU1</fullName>
    </alternativeName>
</protein>
<dbReference type="EC" id="1.1.1.289" evidence="3"/>
<dbReference type="EMBL" id="AF002134">
    <property type="protein sequence ID" value="AAC24463.1"/>
    <property type="molecule type" value="Genomic_DNA"/>
</dbReference>
<dbReference type="EMBL" id="CP017626">
    <property type="protein sequence ID" value="AOW29363.1"/>
    <property type="molecule type" value="Genomic_DNA"/>
</dbReference>
<dbReference type="RefSeq" id="XP_715552.1">
    <property type="nucleotide sequence ID" value="XM_710459.2"/>
</dbReference>
<dbReference type="SMR" id="P87219"/>
<dbReference type="STRING" id="237561.P87219"/>
<dbReference type="EnsemblFungi" id="C4_06390W_A-T">
    <property type="protein sequence ID" value="C4_06390W_A-T-p1"/>
    <property type="gene ID" value="C4_06390W_A"/>
</dbReference>
<dbReference type="GeneID" id="3642799"/>
<dbReference type="KEGG" id="cal:CAALFM_C406390WA"/>
<dbReference type="CGD" id="CAL0000190633">
    <property type="gene designation" value="SOU1"/>
</dbReference>
<dbReference type="VEuPathDB" id="FungiDB:C4_06390W_A"/>
<dbReference type="eggNOG" id="KOG0725">
    <property type="taxonomic scope" value="Eukaryota"/>
</dbReference>
<dbReference type="HOGENOM" id="CLU_010194_1_1_1"/>
<dbReference type="InParanoid" id="P87219"/>
<dbReference type="OMA" id="VAITYER"/>
<dbReference type="OrthoDB" id="1888931at2759"/>
<dbReference type="BRENDA" id="1.1.1.289">
    <property type="organism ID" value="1096"/>
</dbReference>
<dbReference type="BRENDA" id="1.1.1.B3">
    <property type="organism ID" value="1096"/>
</dbReference>
<dbReference type="UniPathway" id="UPA00103"/>
<dbReference type="PRO" id="PR:P87219"/>
<dbReference type="Proteomes" id="UP000000559">
    <property type="component" value="Chromosome 4"/>
</dbReference>
<dbReference type="GO" id="GO:0050085">
    <property type="term" value="F:mannitol 2-dehydrogenase (NADP+) activity"/>
    <property type="evidence" value="ECO:0000314"/>
    <property type="project" value="CGD"/>
</dbReference>
<dbReference type="GO" id="GO:0050664">
    <property type="term" value="F:oxidoreductase activity, acting on NAD(P)H, oxygen as acceptor"/>
    <property type="evidence" value="ECO:0000318"/>
    <property type="project" value="GO_Central"/>
</dbReference>
<dbReference type="GO" id="GO:0032115">
    <property type="term" value="F:sorbose reductase activity"/>
    <property type="evidence" value="ECO:0000314"/>
    <property type="project" value="CGD"/>
</dbReference>
<dbReference type="GO" id="GO:0042850">
    <property type="term" value="P:L-sorbose catabolic process"/>
    <property type="evidence" value="ECO:0000314"/>
    <property type="project" value="CGD"/>
</dbReference>
<dbReference type="CDD" id="cd05352">
    <property type="entry name" value="MDH-like_SDR_c"/>
    <property type="match status" value="1"/>
</dbReference>
<dbReference type="FunFam" id="3.40.50.720:FF:000090">
    <property type="entry name" value="NADP-dependent mannitol dehydrogenase"/>
    <property type="match status" value="1"/>
</dbReference>
<dbReference type="Gene3D" id="3.40.50.720">
    <property type="entry name" value="NAD(P)-binding Rossmann-like Domain"/>
    <property type="match status" value="1"/>
</dbReference>
<dbReference type="InterPro" id="IPR036291">
    <property type="entry name" value="NAD(P)-bd_dom_sf"/>
</dbReference>
<dbReference type="InterPro" id="IPR002347">
    <property type="entry name" value="SDR_fam"/>
</dbReference>
<dbReference type="PANTHER" id="PTHR43008">
    <property type="entry name" value="BENZIL REDUCTASE"/>
    <property type="match status" value="1"/>
</dbReference>
<dbReference type="PANTHER" id="PTHR43008:SF13">
    <property type="entry name" value="L-XYLULOSE REDUCTASE-RELATED"/>
    <property type="match status" value="1"/>
</dbReference>
<dbReference type="Pfam" id="PF13561">
    <property type="entry name" value="adh_short_C2"/>
    <property type="match status" value="1"/>
</dbReference>
<dbReference type="PRINTS" id="PR00081">
    <property type="entry name" value="GDHRDH"/>
</dbReference>
<dbReference type="PRINTS" id="PR00080">
    <property type="entry name" value="SDRFAMILY"/>
</dbReference>
<dbReference type="SUPFAM" id="SSF51735">
    <property type="entry name" value="NAD(P)-binding Rossmann-fold domains"/>
    <property type="match status" value="1"/>
</dbReference>
<sequence>MSEEIISFTNPALGPLPTKAPQLPSNVLDLFSLKGKVASVTGSSGGIGWAVAEAFAQAGADVAIWYNSKPADAKAEYLTEKYGVKAKAYKCNVTDPNDVSKVINEIEKDFGTIDIFVANAGVAWTDGPEIDVQGYDQWKKIVDCDLNGVYYCAHTVGQIFKKNKSGSLIITSSMSGTIVNIPQLQAPYNAAKAACTHLAKSLSVEWASFGARVNSISPGYILTDIADFADPEMKKKWWQLTPLGREGLPQELVGAYLYLASNASTYTTGSNIAVDGGYTCP</sequence>
<reference key="1">
    <citation type="journal article" date="1998" name="Proc. Natl. Acad. Sci. U.S.A.">
        <title>Monosomy of a specific chromosome determines L-sorbose utilization: a novel regulatory mechanism in Candida albicans.</title>
        <authorList>
            <person name="Janbon G."/>
            <person name="Sherman F."/>
            <person name="Rustchenko E."/>
        </authorList>
    </citation>
    <scope>NUCLEOTIDE SEQUENCE [GENOMIC DNA]</scope>
    <source>
        <strain>SOR17</strain>
    </source>
</reference>
<reference key="2">
    <citation type="journal article" date="2004" name="Proc. Natl. Acad. Sci. U.S.A.">
        <title>The diploid genome sequence of Candida albicans.</title>
        <authorList>
            <person name="Jones T."/>
            <person name="Federspiel N.A."/>
            <person name="Chibana H."/>
            <person name="Dungan J."/>
            <person name="Kalman S."/>
            <person name="Magee B.B."/>
            <person name="Newport G."/>
            <person name="Thorstenson Y.R."/>
            <person name="Agabian N."/>
            <person name="Magee P.T."/>
            <person name="Davis R.W."/>
            <person name="Scherer S."/>
        </authorList>
    </citation>
    <scope>NUCLEOTIDE SEQUENCE [LARGE SCALE GENOMIC DNA]</scope>
    <source>
        <strain>SC5314 / ATCC MYA-2876</strain>
    </source>
</reference>
<reference key="3">
    <citation type="journal article" date="2007" name="Genome Biol.">
        <title>Assembly of the Candida albicans genome into sixteen supercontigs aligned on the eight chromosomes.</title>
        <authorList>
            <person name="van het Hoog M."/>
            <person name="Rast T.J."/>
            <person name="Martchenko M."/>
            <person name="Grindle S."/>
            <person name="Dignard D."/>
            <person name="Hogues H."/>
            <person name="Cuomo C."/>
            <person name="Berriman M."/>
            <person name="Scherer S."/>
            <person name="Magee B.B."/>
            <person name="Whiteway M."/>
            <person name="Chibana H."/>
            <person name="Nantel A."/>
            <person name="Magee P.T."/>
        </authorList>
    </citation>
    <scope>GENOME REANNOTATION</scope>
    <source>
        <strain>SC5314 / ATCC MYA-2876</strain>
    </source>
</reference>
<reference key="4">
    <citation type="journal article" date="2013" name="Genome Biol.">
        <title>Assembly of a phased diploid Candida albicans genome facilitates allele-specific measurements and provides a simple model for repeat and indel structure.</title>
        <authorList>
            <person name="Muzzey D."/>
            <person name="Schwartz K."/>
            <person name="Weissman J.S."/>
            <person name="Sherlock G."/>
        </authorList>
    </citation>
    <scope>NUCLEOTIDE SEQUENCE [LARGE SCALE GENOMIC DNA]</scope>
    <scope>GENOME REANNOTATION</scope>
    <source>
        <strain>SC5314 / ATCC MYA-2876</strain>
    </source>
</reference>
<reference key="5">
    <citation type="journal article" date="2005" name="Yeast">
        <title>Candida albicans SOU1 encodes a sorbose reductase required for L-sorbose utilization.</title>
        <authorList>
            <person name="Greenberg J.R."/>
            <person name="Price N.P."/>
            <person name="Oliver R.P."/>
            <person name="Sherman F."/>
            <person name="Rustchenko E."/>
        </authorList>
    </citation>
    <scope>FUNCTION</scope>
    <scope>BIOPHYSICOCHEMICAL PROPERTIES</scope>
    <scope>SUBUNIT</scope>
    <scope>CATALYTIC ACTIVITY</scope>
</reference>
<organism>
    <name type="scientific">Candida albicans (strain SC5314 / ATCC MYA-2876)</name>
    <name type="common">Yeast</name>
    <dbReference type="NCBI Taxonomy" id="237561"/>
    <lineage>
        <taxon>Eukaryota</taxon>
        <taxon>Fungi</taxon>
        <taxon>Dikarya</taxon>
        <taxon>Ascomycota</taxon>
        <taxon>Saccharomycotina</taxon>
        <taxon>Pichiomycetes</taxon>
        <taxon>Debaryomycetaceae</taxon>
        <taxon>Candida/Lodderomyces clade</taxon>
        <taxon>Candida</taxon>
    </lineage>
</organism>